<sequence>MFLTRSEYDRGVNTFSPEGRLFQVEYAIEAIKLGSTAIGICTPEGVVLAVEKRITSPLMVPSTVEKIVEVDKHIGCATSGLMADARTLIERARVECQNHWFVYNERMSIESCAQAVSTLAIQFGDSGDSDGAAAMSRPFGVAILFAGIEAGQPQLWHMDPSGTFVRHGAKAIGSGSEGAQQNLQDLFRPDLTLDEAIDISLNTLKQVMEEKLNSTNVEVMTMTKEREFYMFTKEEVEQHIKNIA</sequence>
<keyword id="KW-0963">Cytoplasm</keyword>
<keyword id="KW-0539">Nucleus</keyword>
<keyword id="KW-0647">Proteasome</keyword>
<keyword id="KW-1185">Reference proteome</keyword>
<name>PSA5_DROME</name>
<evidence type="ECO:0000250" key="1"/>
<evidence type="ECO:0000255" key="2">
    <source>
        <dbReference type="PROSITE-ProRule" id="PRU00808"/>
    </source>
</evidence>
<evidence type="ECO:0000305" key="3"/>
<feature type="chain" id="PRO_0000124121" description="Proteasome subunit alpha type-5">
    <location>
        <begin position="1"/>
        <end position="244"/>
    </location>
</feature>
<feature type="sequence conflict" description="In Ref. 1; AAB93421." evidence="3" ref="1">
    <original>R</original>
    <variation>G</variation>
    <location>
        <position position="166"/>
    </location>
</feature>
<comment type="function">
    <text>The proteasome is a multicatalytic proteinase complex which is characterized by its ability to cleave peptides with Arg, Phe, Tyr, Leu, and Glu adjacent to the leaving group at neutral or slightly basic pH. The proteasome has an ATP-dependent proteolytic activity.</text>
</comment>
<comment type="subunit">
    <text evidence="1">The 26S proteasome consists of a 20S proteasome core and two 19S regulatory subunits. The 20S proteasome core is composed of 28 subunits that are arranged in four stacked rings, resulting in a barrel-shaped structure. The two end rings are each formed by seven alpha subunits, and the two central rings are each formed by seven beta subunits. The catalytic chamber with the active sites is on the inside of the barrel (By similarity).</text>
</comment>
<comment type="interaction">
    <interactant intactId="EBI-142547">
        <id>Q95083</id>
    </interactant>
    <interactant intactId="EBI-93148">
        <id>P22769</id>
        <label>Prosalpha4</label>
    </interactant>
    <organismsDiffer>false</organismsDiffer>
    <experiments>3</experiments>
</comment>
<comment type="subcellular location">
    <subcellularLocation>
        <location evidence="1">Cytoplasm</location>
    </subcellularLocation>
    <subcellularLocation>
        <location evidence="1">Nucleus</location>
    </subcellularLocation>
</comment>
<comment type="similarity">
    <text evidence="2">Belongs to the peptidase T1A family.</text>
</comment>
<gene>
    <name type="primary">Prosalpha5</name>
    <name type="synonym">ProsMA5</name>
    <name type="ORF">CG10938</name>
</gene>
<organism>
    <name type="scientific">Drosophila melanogaster</name>
    <name type="common">Fruit fly</name>
    <dbReference type="NCBI Taxonomy" id="7227"/>
    <lineage>
        <taxon>Eukaryota</taxon>
        <taxon>Metazoa</taxon>
        <taxon>Ecdysozoa</taxon>
        <taxon>Arthropoda</taxon>
        <taxon>Hexapoda</taxon>
        <taxon>Insecta</taxon>
        <taxon>Pterygota</taxon>
        <taxon>Neoptera</taxon>
        <taxon>Endopterygota</taxon>
        <taxon>Diptera</taxon>
        <taxon>Brachycera</taxon>
        <taxon>Muscomorpha</taxon>
        <taxon>Ephydroidea</taxon>
        <taxon>Drosophilidae</taxon>
        <taxon>Drosophila</taxon>
        <taxon>Sophophora</taxon>
    </lineage>
</organism>
<dbReference type="EMBL" id="U64721">
    <property type="protein sequence ID" value="AAB93421.1"/>
    <property type="molecule type" value="Genomic_DNA"/>
</dbReference>
<dbReference type="EMBL" id="AE013599">
    <property type="protein sequence ID" value="AAF57875.1"/>
    <property type="molecule type" value="Genomic_DNA"/>
</dbReference>
<dbReference type="EMBL" id="AY061404">
    <property type="protein sequence ID" value="AAL28952.1"/>
    <property type="molecule type" value="mRNA"/>
</dbReference>
<dbReference type="RefSeq" id="NP_477202.2">
    <property type="nucleotide sequence ID" value="NM_057854.4"/>
</dbReference>
<dbReference type="RefSeq" id="NP_725669.1">
    <property type="nucleotide sequence ID" value="NM_166221.4"/>
</dbReference>
<dbReference type="SMR" id="Q95083"/>
<dbReference type="BioGRID" id="62645">
    <property type="interactions" value="40"/>
</dbReference>
<dbReference type="ComplexPortal" id="CPX-9070">
    <property type="entry name" value="26S proteasome complex"/>
</dbReference>
<dbReference type="ComplexPortal" id="CPX-9087">
    <property type="entry name" value="26S proteasome complex, testis-specific variant"/>
</dbReference>
<dbReference type="DIP" id="DIP-19014N"/>
<dbReference type="FunCoup" id="Q95083">
    <property type="interactions" value="1598"/>
</dbReference>
<dbReference type="IntAct" id="Q95083">
    <property type="interactions" value="75"/>
</dbReference>
<dbReference type="STRING" id="7227.FBpp0086066"/>
<dbReference type="PaxDb" id="7227-FBpp0086066"/>
<dbReference type="DNASU" id="36951"/>
<dbReference type="EnsemblMetazoa" id="FBtr0086910">
    <property type="protein sequence ID" value="FBpp0086066"/>
    <property type="gene ID" value="FBgn0016697"/>
</dbReference>
<dbReference type="EnsemblMetazoa" id="FBtr0086911">
    <property type="protein sequence ID" value="FBpp0086067"/>
    <property type="gene ID" value="FBgn0016697"/>
</dbReference>
<dbReference type="GeneID" id="36951"/>
<dbReference type="KEGG" id="dme:Dmel_CG10938"/>
<dbReference type="AGR" id="FB:FBgn0016697"/>
<dbReference type="CTD" id="36951"/>
<dbReference type="FlyBase" id="FBgn0016697">
    <property type="gene designation" value="Prosalpha5"/>
</dbReference>
<dbReference type="VEuPathDB" id="VectorBase:FBgn0016697"/>
<dbReference type="eggNOG" id="KOG0176">
    <property type="taxonomic scope" value="Eukaryota"/>
</dbReference>
<dbReference type="GeneTree" id="ENSGT00550000074958"/>
<dbReference type="HOGENOM" id="CLU_035750_4_2_1"/>
<dbReference type="InParanoid" id="Q95083"/>
<dbReference type="OMA" id="RSMIDHA"/>
<dbReference type="OrthoDB" id="431557at2759"/>
<dbReference type="PhylomeDB" id="Q95083"/>
<dbReference type="Reactome" id="R-DME-1169091">
    <property type="pathway name" value="Activation of NF-kappaB in B cells"/>
</dbReference>
<dbReference type="Reactome" id="R-DME-1234176">
    <property type="pathway name" value="Oxygen-dependent proline hydroxylation of Hypoxia-inducible Factor Alpha"/>
</dbReference>
<dbReference type="Reactome" id="R-DME-1236978">
    <property type="pathway name" value="Cross-presentation of soluble exogenous antigens (endosomes)"/>
</dbReference>
<dbReference type="Reactome" id="R-DME-174084">
    <property type="pathway name" value="Autodegradation of Cdh1 by Cdh1:APC/C"/>
</dbReference>
<dbReference type="Reactome" id="R-DME-174154">
    <property type="pathway name" value="APC/C:Cdc20 mediated degradation of Securin"/>
</dbReference>
<dbReference type="Reactome" id="R-DME-174178">
    <property type="pathway name" value="APC/C:Cdh1 mediated degradation of Cdc20 and other APC/C:Cdh1 targeted proteins in late mitosis/early G1"/>
</dbReference>
<dbReference type="Reactome" id="R-DME-174184">
    <property type="pathway name" value="Cdc20:Phospho-APC/C mediated degradation of Cyclin A"/>
</dbReference>
<dbReference type="Reactome" id="R-DME-187577">
    <property type="pathway name" value="SCF(Skp2)-mediated degradation of p27/p21"/>
</dbReference>
<dbReference type="Reactome" id="R-DME-195253">
    <property type="pathway name" value="Degradation of beta-catenin by the destruction complex"/>
</dbReference>
<dbReference type="Reactome" id="R-DME-202424">
    <property type="pathway name" value="Downstream TCR signaling"/>
</dbReference>
<dbReference type="Reactome" id="R-DME-209360">
    <property type="pathway name" value="Ubiquitination and proteolysis of phosphorylated CI"/>
</dbReference>
<dbReference type="Reactome" id="R-DME-209406">
    <property type="pathway name" value="Degradation of NF-kappa-B inhibitor, CACT"/>
</dbReference>
<dbReference type="Reactome" id="R-DME-209461">
    <property type="pathway name" value="Ubiquitination and degradation of phosphorylated ARM"/>
</dbReference>
<dbReference type="Reactome" id="R-DME-216167">
    <property type="pathway name" value="Nuclear CI is degraded"/>
</dbReference>
<dbReference type="Reactome" id="R-DME-2467813">
    <property type="pathway name" value="Separation of Sister Chromatids"/>
</dbReference>
<dbReference type="Reactome" id="R-DME-2871837">
    <property type="pathway name" value="FCERI mediated NF-kB activation"/>
</dbReference>
<dbReference type="Reactome" id="R-DME-350562">
    <property type="pathway name" value="Regulation of ornithine decarboxylase (ODC)"/>
</dbReference>
<dbReference type="Reactome" id="R-DME-382556">
    <property type="pathway name" value="ABC-family proteins mediated transport"/>
</dbReference>
<dbReference type="Reactome" id="R-DME-432395">
    <property type="pathway name" value="Degradation of TIM"/>
</dbReference>
<dbReference type="Reactome" id="R-DME-432524">
    <property type="pathway name" value="Degradation of PER"/>
</dbReference>
<dbReference type="Reactome" id="R-DME-432626">
    <property type="pathway name" value="Circadian Clock pathway"/>
</dbReference>
<dbReference type="Reactome" id="R-DME-450408">
    <property type="pathway name" value="AUF1 (hnRNP D0) binds and destabilizes mRNA"/>
</dbReference>
<dbReference type="Reactome" id="R-DME-4608870">
    <property type="pathway name" value="Asymmetric localization of PCP proteins"/>
</dbReference>
<dbReference type="Reactome" id="R-DME-4641257">
    <property type="pathway name" value="Degradation of AXIN"/>
</dbReference>
<dbReference type="Reactome" id="R-DME-4641258">
    <property type="pathway name" value="Degradation of DVL"/>
</dbReference>
<dbReference type="Reactome" id="R-DME-5358346">
    <property type="pathway name" value="Hedgehog ligand biogenesis"/>
</dbReference>
<dbReference type="Reactome" id="R-DME-538864">
    <property type="pathway name" value="Degradation of CRY"/>
</dbReference>
<dbReference type="Reactome" id="R-DME-5607761">
    <property type="pathway name" value="Dectin-1 mediated noncanonical NF-kB signaling"/>
</dbReference>
<dbReference type="Reactome" id="R-DME-5607764">
    <property type="pathway name" value="CLEC7A (Dectin-1) signaling"/>
</dbReference>
<dbReference type="Reactome" id="R-DME-5610780">
    <property type="pathway name" value="Degradation of GLI1 by the proteasome"/>
</dbReference>
<dbReference type="Reactome" id="R-DME-5610785">
    <property type="pathway name" value="GLI3 is processed to GLI3R by the proteasome"/>
</dbReference>
<dbReference type="Reactome" id="R-DME-5632684">
    <property type="pathway name" value="Hedgehog 'on' state"/>
</dbReference>
<dbReference type="Reactome" id="R-DME-5658442">
    <property type="pathway name" value="Regulation of RAS by GAPs"/>
</dbReference>
<dbReference type="Reactome" id="R-DME-5676590">
    <property type="pathway name" value="NIK--&gt;noncanonical NF-kB signaling"/>
</dbReference>
<dbReference type="Reactome" id="R-DME-5689603">
    <property type="pathway name" value="UCH proteinases"/>
</dbReference>
<dbReference type="Reactome" id="R-DME-5689880">
    <property type="pathway name" value="Ub-specific processing proteases"/>
</dbReference>
<dbReference type="Reactome" id="R-DME-6798695">
    <property type="pathway name" value="Neutrophil degranulation"/>
</dbReference>
<dbReference type="Reactome" id="R-DME-68949">
    <property type="pathway name" value="Orc1 removal from chromatin"/>
</dbReference>
<dbReference type="Reactome" id="R-DME-69017">
    <property type="pathway name" value="CDK-mediated phosphorylation and removal of Cdc6"/>
</dbReference>
<dbReference type="Reactome" id="R-DME-69601">
    <property type="pathway name" value="Ubiquitin Mediated Degradation of Phosphorylated Cdc25A"/>
</dbReference>
<dbReference type="Reactome" id="R-DME-75815">
    <property type="pathway name" value="Ubiquitin-dependent degradation of Cyclin D"/>
</dbReference>
<dbReference type="Reactome" id="R-DME-8854050">
    <property type="pathway name" value="FBXL7 down-regulates AURKA during mitotic entry and in early mitosis"/>
</dbReference>
<dbReference type="Reactome" id="R-DME-8939236">
    <property type="pathway name" value="RUNX1 regulates transcription of genes involved in differentiation of HSCs"/>
</dbReference>
<dbReference type="Reactome" id="R-DME-8939902">
    <property type="pathway name" value="Regulation of RUNX2 expression and activity"/>
</dbReference>
<dbReference type="Reactome" id="R-DME-8941858">
    <property type="pathway name" value="Regulation of RUNX3 expression and activity"/>
</dbReference>
<dbReference type="Reactome" id="R-DME-8948751">
    <property type="pathway name" value="Regulation of PTEN stability and activity"/>
</dbReference>
<dbReference type="Reactome" id="R-DME-8951664">
    <property type="pathway name" value="Neddylation"/>
</dbReference>
<dbReference type="Reactome" id="R-DME-9020702">
    <property type="pathway name" value="Interleukin-1 signaling"/>
</dbReference>
<dbReference type="Reactome" id="R-DME-9755511">
    <property type="pathway name" value="KEAP1-NFE2L2 pathway"/>
</dbReference>
<dbReference type="Reactome" id="R-DME-9762114">
    <property type="pathway name" value="GSK3B and BTRC:CUL1-mediated-degradation of NFE2L2"/>
</dbReference>
<dbReference type="Reactome" id="R-DME-983168">
    <property type="pathway name" value="Antigen processing: Ubiquitination &amp; Proteasome degradation"/>
</dbReference>
<dbReference type="Reactome" id="R-DME-9907900">
    <property type="pathway name" value="Proteasome assembly"/>
</dbReference>
<dbReference type="BioGRID-ORCS" id="36951">
    <property type="hits" value="0 hits in 1 CRISPR screen"/>
</dbReference>
<dbReference type="GenomeRNAi" id="36951"/>
<dbReference type="PRO" id="PR:Q95083"/>
<dbReference type="Proteomes" id="UP000000803">
    <property type="component" value="Chromosome 2R"/>
</dbReference>
<dbReference type="Bgee" id="FBgn0016697">
    <property type="expression patterns" value="Expressed in egg cell and 180 other cell types or tissues"/>
</dbReference>
<dbReference type="GO" id="GO:0005829">
    <property type="term" value="C:cytosol"/>
    <property type="evidence" value="ECO:0000304"/>
    <property type="project" value="Reactome"/>
</dbReference>
<dbReference type="GO" id="GO:0005654">
    <property type="term" value="C:nucleoplasm"/>
    <property type="evidence" value="ECO:0000304"/>
    <property type="project" value="Reactome"/>
</dbReference>
<dbReference type="GO" id="GO:0005634">
    <property type="term" value="C:nucleus"/>
    <property type="evidence" value="ECO:0000318"/>
    <property type="project" value="GO_Central"/>
</dbReference>
<dbReference type="GO" id="GO:0000502">
    <property type="term" value="C:proteasome complex"/>
    <property type="evidence" value="ECO:0000314"/>
    <property type="project" value="FlyBase"/>
</dbReference>
<dbReference type="GO" id="GO:0005839">
    <property type="term" value="C:proteasome core complex"/>
    <property type="evidence" value="ECO:0000314"/>
    <property type="project" value="FlyBase"/>
</dbReference>
<dbReference type="GO" id="GO:0019773">
    <property type="term" value="C:proteasome core complex, alpha-subunit complex"/>
    <property type="evidence" value="ECO:0000250"/>
    <property type="project" value="UniProtKB"/>
</dbReference>
<dbReference type="GO" id="GO:0008340">
    <property type="term" value="P:determination of adult lifespan"/>
    <property type="evidence" value="ECO:0000315"/>
    <property type="project" value="FlyBase"/>
</dbReference>
<dbReference type="GO" id="GO:0043161">
    <property type="term" value="P:proteasome-mediated ubiquitin-dependent protein catabolic process"/>
    <property type="evidence" value="ECO:0000315"/>
    <property type="project" value="FlyBase"/>
</dbReference>
<dbReference type="CDD" id="cd03753">
    <property type="entry name" value="proteasome_alpha_type_5"/>
    <property type="match status" value="1"/>
</dbReference>
<dbReference type="FunFam" id="3.60.20.10:FF:000019">
    <property type="entry name" value="Proteasome subunit alpha type"/>
    <property type="match status" value="1"/>
</dbReference>
<dbReference type="Gene3D" id="3.60.20.10">
    <property type="entry name" value="Glutamine Phosphoribosylpyrophosphate, subunit 1, domain 1"/>
    <property type="match status" value="1"/>
</dbReference>
<dbReference type="InterPro" id="IPR029055">
    <property type="entry name" value="Ntn_hydrolases_N"/>
</dbReference>
<dbReference type="InterPro" id="IPR050115">
    <property type="entry name" value="Proteasome_alpha"/>
</dbReference>
<dbReference type="InterPro" id="IPR023332">
    <property type="entry name" value="Proteasome_alpha-type"/>
</dbReference>
<dbReference type="InterPro" id="IPR033812">
    <property type="entry name" value="Proteasome_alpha_type_5"/>
</dbReference>
<dbReference type="InterPro" id="IPR000426">
    <property type="entry name" value="Proteasome_asu_N"/>
</dbReference>
<dbReference type="InterPro" id="IPR001353">
    <property type="entry name" value="Proteasome_sua/b"/>
</dbReference>
<dbReference type="NCBIfam" id="NF003075">
    <property type="entry name" value="PRK03996.1"/>
    <property type="match status" value="1"/>
</dbReference>
<dbReference type="PANTHER" id="PTHR11599">
    <property type="entry name" value="PROTEASOME SUBUNIT ALPHA/BETA"/>
    <property type="match status" value="1"/>
</dbReference>
<dbReference type="Pfam" id="PF00227">
    <property type="entry name" value="Proteasome"/>
    <property type="match status" value="1"/>
</dbReference>
<dbReference type="Pfam" id="PF10584">
    <property type="entry name" value="Proteasome_A_N"/>
    <property type="match status" value="1"/>
</dbReference>
<dbReference type="SMART" id="SM00948">
    <property type="entry name" value="Proteasome_A_N"/>
    <property type="match status" value="1"/>
</dbReference>
<dbReference type="SUPFAM" id="SSF56235">
    <property type="entry name" value="N-terminal nucleophile aminohydrolases (Ntn hydrolases)"/>
    <property type="match status" value="1"/>
</dbReference>
<dbReference type="PROSITE" id="PS00388">
    <property type="entry name" value="PROTEASOME_ALPHA_1"/>
    <property type="match status" value="1"/>
</dbReference>
<dbReference type="PROSITE" id="PS51475">
    <property type="entry name" value="PROTEASOME_ALPHA_2"/>
    <property type="match status" value="1"/>
</dbReference>
<proteinExistence type="evidence at protein level"/>
<protein>
    <recommendedName>
        <fullName>Proteasome subunit alpha type-5</fullName>
    </recommendedName>
</protein>
<reference key="1">
    <citation type="journal article" date="1997" name="Gene">
        <title>Molecular cloning of the Drosophila melanogaster gene alpha5_dm encoding a 20S proteasome alpha-type subunit.</title>
        <authorList>
            <person name="Zaiss D."/>
            <person name="Belote J.M."/>
        </authorList>
    </citation>
    <scope>NUCLEOTIDE SEQUENCE [GENOMIC DNA]</scope>
</reference>
<reference key="2">
    <citation type="journal article" date="2000" name="Science">
        <title>The genome sequence of Drosophila melanogaster.</title>
        <authorList>
            <person name="Adams M.D."/>
            <person name="Celniker S.E."/>
            <person name="Holt R.A."/>
            <person name="Evans C.A."/>
            <person name="Gocayne J.D."/>
            <person name="Amanatides P.G."/>
            <person name="Scherer S.E."/>
            <person name="Li P.W."/>
            <person name="Hoskins R.A."/>
            <person name="Galle R.F."/>
            <person name="George R.A."/>
            <person name="Lewis S.E."/>
            <person name="Richards S."/>
            <person name="Ashburner M."/>
            <person name="Henderson S.N."/>
            <person name="Sutton G.G."/>
            <person name="Wortman J.R."/>
            <person name="Yandell M.D."/>
            <person name="Zhang Q."/>
            <person name="Chen L.X."/>
            <person name="Brandon R.C."/>
            <person name="Rogers Y.-H.C."/>
            <person name="Blazej R.G."/>
            <person name="Champe M."/>
            <person name="Pfeiffer B.D."/>
            <person name="Wan K.H."/>
            <person name="Doyle C."/>
            <person name="Baxter E.G."/>
            <person name="Helt G."/>
            <person name="Nelson C.R."/>
            <person name="Miklos G.L.G."/>
            <person name="Abril J.F."/>
            <person name="Agbayani A."/>
            <person name="An H.-J."/>
            <person name="Andrews-Pfannkoch C."/>
            <person name="Baldwin D."/>
            <person name="Ballew R.M."/>
            <person name="Basu A."/>
            <person name="Baxendale J."/>
            <person name="Bayraktaroglu L."/>
            <person name="Beasley E.M."/>
            <person name="Beeson K.Y."/>
            <person name="Benos P.V."/>
            <person name="Berman B.P."/>
            <person name="Bhandari D."/>
            <person name="Bolshakov S."/>
            <person name="Borkova D."/>
            <person name="Botchan M.R."/>
            <person name="Bouck J."/>
            <person name="Brokstein P."/>
            <person name="Brottier P."/>
            <person name="Burtis K.C."/>
            <person name="Busam D.A."/>
            <person name="Butler H."/>
            <person name="Cadieu E."/>
            <person name="Center A."/>
            <person name="Chandra I."/>
            <person name="Cherry J.M."/>
            <person name="Cawley S."/>
            <person name="Dahlke C."/>
            <person name="Davenport L.B."/>
            <person name="Davies P."/>
            <person name="de Pablos B."/>
            <person name="Delcher A."/>
            <person name="Deng Z."/>
            <person name="Mays A.D."/>
            <person name="Dew I."/>
            <person name="Dietz S.M."/>
            <person name="Dodson K."/>
            <person name="Doup L.E."/>
            <person name="Downes M."/>
            <person name="Dugan-Rocha S."/>
            <person name="Dunkov B.C."/>
            <person name="Dunn P."/>
            <person name="Durbin K.J."/>
            <person name="Evangelista C.C."/>
            <person name="Ferraz C."/>
            <person name="Ferriera S."/>
            <person name="Fleischmann W."/>
            <person name="Fosler C."/>
            <person name="Gabrielian A.E."/>
            <person name="Garg N.S."/>
            <person name="Gelbart W.M."/>
            <person name="Glasser K."/>
            <person name="Glodek A."/>
            <person name="Gong F."/>
            <person name="Gorrell J.H."/>
            <person name="Gu Z."/>
            <person name="Guan P."/>
            <person name="Harris M."/>
            <person name="Harris N.L."/>
            <person name="Harvey D.A."/>
            <person name="Heiman T.J."/>
            <person name="Hernandez J.R."/>
            <person name="Houck J."/>
            <person name="Hostin D."/>
            <person name="Houston K.A."/>
            <person name="Howland T.J."/>
            <person name="Wei M.-H."/>
            <person name="Ibegwam C."/>
            <person name="Jalali M."/>
            <person name="Kalush F."/>
            <person name="Karpen G.H."/>
            <person name="Ke Z."/>
            <person name="Kennison J.A."/>
            <person name="Ketchum K.A."/>
            <person name="Kimmel B.E."/>
            <person name="Kodira C.D."/>
            <person name="Kraft C.L."/>
            <person name="Kravitz S."/>
            <person name="Kulp D."/>
            <person name="Lai Z."/>
            <person name="Lasko P."/>
            <person name="Lei Y."/>
            <person name="Levitsky A.A."/>
            <person name="Li J.H."/>
            <person name="Li Z."/>
            <person name="Liang Y."/>
            <person name="Lin X."/>
            <person name="Liu X."/>
            <person name="Mattei B."/>
            <person name="McIntosh T.C."/>
            <person name="McLeod M.P."/>
            <person name="McPherson D."/>
            <person name="Merkulov G."/>
            <person name="Milshina N.V."/>
            <person name="Mobarry C."/>
            <person name="Morris J."/>
            <person name="Moshrefi A."/>
            <person name="Mount S.M."/>
            <person name="Moy M."/>
            <person name="Murphy B."/>
            <person name="Murphy L."/>
            <person name="Muzny D.M."/>
            <person name="Nelson D.L."/>
            <person name="Nelson D.R."/>
            <person name="Nelson K.A."/>
            <person name="Nixon K."/>
            <person name="Nusskern D.R."/>
            <person name="Pacleb J.M."/>
            <person name="Palazzolo M."/>
            <person name="Pittman G.S."/>
            <person name="Pan S."/>
            <person name="Pollard J."/>
            <person name="Puri V."/>
            <person name="Reese M.G."/>
            <person name="Reinert K."/>
            <person name="Remington K."/>
            <person name="Saunders R.D.C."/>
            <person name="Scheeler F."/>
            <person name="Shen H."/>
            <person name="Shue B.C."/>
            <person name="Siden-Kiamos I."/>
            <person name="Simpson M."/>
            <person name="Skupski M.P."/>
            <person name="Smith T.J."/>
            <person name="Spier E."/>
            <person name="Spradling A.C."/>
            <person name="Stapleton M."/>
            <person name="Strong R."/>
            <person name="Sun E."/>
            <person name="Svirskas R."/>
            <person name="Tector C."/>
            <person name="Turner R."/>
            <person name="Venter E."/>
            <person name="Wang A.H."/>
            <person name="Wang X."/>
            <person name="Wang Z.-Y."/>
            <person name="Wassarman D.A."/>
            <person name="Weinstock G.M."/>
            <person name="Weissenbach J."/>
            <person name="Williams S.M."/>
            <person name="Woodage T."/>
            <person name="Worley K.C."/>
            <person name="Wu D."/>
            <person name="Yang S."/>
            <person name="Yao Q.A."/>
            <person name="Ye J."/>
            <person name="Yeh R.-F."/>
            <person name="Zaveri J.S."/>
            <person name="Zhan M."/>
            <person name="Zhang G."/>
            <person name="Zhao Q."/>
            <person name="Zheng L."/>
            <person name="Zheng X.H."/>
            <person name="Zhong F.N."/>
            <person name="Zhong W."/>
            <person name="Zhou X."/>
            <person name="Zhu S.C."/>
            <person name="Zhu X."/>
            <person name="Smith H.O."/>
            <person name="Gibbs R.A."/>
            <person name="Myers E.W."/>
            <person name="Rubin G.M."/>
            <person name="Venter J.C."/>
        </authorList>
    </citation>
    <scope>NUCLEOTIDE SEQUENCE [LARGE SCALE GENOMIC DNA]</scope>
    <source>
        <strain>Berkeley</strain>
    </source>
</reference>
<reference key="3">
    <citation type="journal article" date="2002" name="Genome Biol.">
        <title>Annotation of the Drosophila melanogaster euchromatic genome: a systematic review.</title>
        <authorList>
            <person name="Misra S."/>
            <person name="Crosby M.A."/>
            <person name="Mungall C.J."/>
            <person name="Matthews B.B."/>
            <person name="Campbell K.S."/>
            <person name="Hradecky P."/>
            <person name="Huang Y."/>
            <person name="Kaminker J.S."/>
            <person name="Millburn G.H."/>
            <person name="Prochnik S.E."/>
            <person name="Smith C.D."/>
            <person name="Tupy J.L."/>
            <person name="Whitfield E.J."/>
            <person name="Bayraktaroglu L."/>
            <person name="Berman B.P."/>
            <person name="Bettencourt B.R."/>
            <person name="Celniker S.E."/>
            <person name="de Grey A.D.N.J."/>
            <person name="Drysdale R.A."/>
            <person name="Harris N.L."/>
            <person name="Richter J."/>
            <person name="Russo S."/>
            <person name="Schroeder A.J."/>
            <person name="Shu S.Q."/>
            <person name="Stapleton M."/>
            <person name="Yamada C."/>
            <person name="Ashburner M."/>
            <person name="Gelbart W.M."/>
            <person name="Rubin G.M."/>
            <person name="Lewis S.E."/>
        </authorList>
    </citation>
    <scope>GENOME REANNOTATION</scope>
    <source>
        <strain>Berkeley</strain>
    </source>
</reference>
<reference key="4">
    <citation type="journal article" date="2002" name="Genome Biol.">
        <title>A Drosophila full-length cDNA resource.</title>
        <authorList>
            <person name="Stapleton M."/>
            <person name="Carlson J.W."/>
            <person name="Brokstein P."/>
            <person name="Yu C."/>
            <person name="Champe M."/>
            <person name="George R.A."/>
            <person name="Guarin H."/>
            <person name="Kronmiller B."/>
            <person name="Pacleb J.M."/>
            <person name="Park S."/>
            <person name="Wan K.H."/>
            <person name="Rubin G.M."/>
            <person name="Celniker S.E."/>
        </authorList>
    </citation>
    <scope>NUCLEOTIDE SEQUENCE [LARGE SCALE MRNA]</scope>
    <source>
        <strain>Berkeley</strain>
        <tissue>Embryo</tissue>
    </source>
</reference>
<accession>Q95083</accession>
<accession>Q0E942</accession>
<accession>Q9V809</accession>